<protein>
    <recommendedName>
        <fullName evidence="1">Glutamyl-tRNA reductase</fullName>
        <shortName evidence="1">GluTR</shortName>
        <ecNumber evidence="1">1.2.1.70</ecNumber>
    </recommendedName>
</protein>
<keyword id="KW-0521">NADP</keyword>
<keyword id="KW-0560">Oxidoreductase</keyword>
<keyword id="KW-0627">Porphyrin biosynthesis</keyword>
<accession>Q022E5</accession>
<name>HEM1_SOLUE</name>
<proteinExistence type="inferred from homology"/>
<comment type="function">
    <text evidence="1">Catalyzes the NADPH-dependent reduction of glutamyl-tRNA(Glu) to glutamate 1-semialdehyde (GSA).</text>
</comment>
<comment type="catalytic activity">
    <reaction evidence="1">
        <text>(S)-4-amino-5-oxopentanoate + tRNA(Glu) + NADP(+) = L-glutamyl-tRNA(Glu) + NADPH + H(+)</text>
        <dbReference type="Rhea" id="RHEA:12344"/>
        <dbReference type="Rhea" id="RHEA-COMP:9663"/>
        <dbReference type="Rhea" id="RHEA-COMP:9680"/>
        <dbReference type="ChEBI" id="CHEBI:15378"/>
        <dbReference type="ChEBI" id="CHEBI:57501"/>
        <dbReference type="ChEBI" id="CHEBI:57783"/>
        <dbReference type="ChEBI" id="CHEBI:58349"/>
        <dbReference type="ChEBI" id="CHEBI:78442"/>
        <dbReference type="ChEBI" id="CHEBI:78520"/>
        <dbReference type="EC" id="1.2.1.70"/>
    </reaction>
</comment>
<comment type="pathway">
    <text evidence="1">Porphyrin-containing compound metabolism; protoporphyrin-IX biosynthesis; 5-aminolevulinate from L-glutamyl-tRNA(Glu): step 1/2.</text>
</comment>
<comment type="subunit">
    <text evidence="1">Homodimer.</text>
</comment>
<comment type="domain">
    <text evidence="1">Possesses an unusual extended V-shaped dimeric structure with each monomer consisting of three distinct domains arranged along a curved 'spinal' alpha-helix. The N-terminal catalytic domain specifically recognizes the glutamate moiety of the substrate. The second domain is the NADPH-binding domain, and the third C-terminal domain is responsible for dimerization.</text>
</comment>
<comment type="miscellaneous">
    <text evidence="1">During catalysis, the active site Cys acts as a nucleophile attacking the alpha-carbonyl group of tRNA-bound glutamate with the formation of a thioester intermediate between enzyme and glutamate, and the concomitant release of tRNA(Glu). The thioester intermediate is finally reduced by direct hydride transfer from NADPH, to form the product GSA.</text>
</comment>
<comment type="similarity">
    <text evidence="1">Belongs to the glutamyl-tRNA reductase family.</text>
</comment>
<feature type="chain" id="PRO_0000335073" description="Glutamyl-tRNA reductase">
    <location>
        <begin position="1"/>
        <end position="421"/>
    </location>
</feature>
<feature type="active site" description="Nucleophile" evidence="1">
    <location>
        <position position="50"/>
    </location>
</feature>
<feature type="binding site" evidence="1">
    <location>
        <begin position="49"/>
        <end position="52"/>
    </location>
    <ligand>
        <name>substrate</name>
    </ligand>
</feature>
<feature type="binding site" evidence="1">
    <location>
        <position position="109"/>
    </location>
    <ligand>
        <name>substrate</name>
    </ligand>
</feature>
<feature type="binding site" evidence="1">
    <location>
        <begin position="114"/>
        <end position="116"/>
    </location>
    <ligand>
        <name>substrate</name>
    </ligand>
</feature>
<feature type="binding site" evidence="1">
    <location>
        <position position="120"/>
    </location>
    <ligand>
        <name>substrate</name>
    </ligand>
</feature>
<feature type="binding site" evidence="1">
    <location>
        <begin position="189"/>
        <end position="194"/>
    </location>
    <ligand>
        <name>NADP(+)</name>
        <dbReference type="ChEBI" id="CHEBI:58349"/>
    </ligand>
</feature>
<feature type="site" description="Important for activity" evidence="1">
    <location>
        <position position="99"/>
    </location>
</feature>
<evidence type="ECO:0000255" key="1">
    <source>
        <dbReference type="HAMAP-Rule" id="MF_00087"/>
    </source>
</evidence>
<organism>
    <name type="scientific">Solibacter usitatus (strain Ellin6076)</name>
    <dbReference type="NCBI Taxonomy" id="234267"/>
    <lineage>
        <taxon>Bacteria</taxon>
        <taxon>Pseudomonadati</taxon>
        <taxon>Acidobacteriota</taxon>
        <taxon>Terriglobia</taxon>
        <taxon>Bryobacterales</taxon>
        <taxon>Solibacteraceae</taxon>
        <taxon>Candidatus Solibacter</taxon>
    </lineage>
</organism>
<dbReference type="EC" id="1.2.1.70" evidence="1"/>
<dbReference type="EMBL" id="CP000473">
    <property type="protein sequence ID" value="ABJ84155.1"/>
    <property type="molecule type" value="Genomic_DNA"/>
</dbReference>
<dbReference type="SMR" id="Q022E5"/>
<dbReference type="FunCoup" id="Q022E5">
    <property type="interactions" value="378"/>
</dbReference>
<dbReference type="STRING" id="234267.Acid_3178"/>
<dbReference type="KEGG" id="sus:Acid_3178"/>
<dbReference type="eggNOG" id="COG0373">
    <property type="taxonomic scope" value="Bacteria"/>
</dbReference>
<dbReference type="HOGENOM" id="CLU_035113_2_2_0"/>
<dbReference type="InParanoid" id="Q022E5"/>
<dbReference type="OrthoDB" id="110209at2"/>
<dbReference type="UniPathway" id="UPA00251">
    <property type="reaction ID" value="UER00316"/>
</dbReference>
<dbReference type="GO" id="GO:0008883">
    <property type="term" value="F:glutamyl-tRNA reductase activity"/>
    <property type="evidence" value="ECO:0007669"/>
    <property type="project" value="UniProtKB-UniRule"/>
</dbReference>
<dbReference type="GO" id="GO:0050661">
    <property type="term" value="F:NADP binding"/>
    <property type="evidence" value="ECO:0007669"/>
    <property type="project" value="InterPro"/>
</dbReference>
<dbReference type="GO" id="GO:0019353">
    <property type="term" value="P:protoporphyrinogen IX biosynthetic process from glutamate"/>
    <property type="evidence" value="ECO:0007669"/>
    <property type="project" value="TreeGrafter"/>
</dbReference>
<dbReference type="CDD" id="cd05213">
    <property type="entry name" value="NAD_bind_Glutamyl_tRNA_reduct"/>
    <property type="match status" value="1"/>
</dbReference>
<dbReference type="FunFam" id="3.30.460.30:FF:000001">
    <property type="entry name" value="Glutamyl-tRNA reductase"/>
    <property type="match status" value="1"/>
</dbReference>
<dbReference type="FunFam" id="3.40.50.720:FF:000031">
    <property type="entry name" value="Glutamyl-tRNA reductase"/>
    <property type="match status" value="1"/>
</dbReference>
<dbReference type="Gene3D" id="3.30.460.30">
    <property type="entry name" value="Glutamyl-tRNA reductase, N-terminal domain"/>
    <property type="match status" value="1"/>
</dbReference>
<dbReference type="Gene3D" id="3.40.50.720">
    <property type="entry name" value="NAD(P)-binding Rossmann-like Domain"/>
    <property type="match status" value="1"/>
</dbReference>
<dbReference type="HAMAP" id="MF_00087">
    <property type="entry name" value="Glu_tRNA_reductase"/>
    <property type="match status" value="1"/>
</dbReference>
<dbReference type="InterPro" id="IPR000343">
    <property type="entry name" value="4pyrrol_synth_GluRdtase"/>
</dbReference>
<dbReference type="InterPro" id="IPR015896">
    <property type="entry name" value="4pyrrol_synth_GluRdtase_dimer"/>
</dbReference>
<dbReference type="InterPro" id="IPR015895">
    <property type="entry name" value="4pyrrol_synth_GluRdtase_N"/>
</dbReference>
<dbReference type="InterPro" id="IPR018214">
    <property type="entry name" value="GluRdtase_CS"/>
</dbReference>
<dbReference type="InterPro" id="IPR036453">
    <property type="entry name" value="GluRdtase_dimer_dom_sf"/>
</dbReference>
<dbReference type="InterPro" id="IPR036343">
    <property type="entry name" value="GluRdtase_N_sf"/>
</dbReference>
<dbReference type="InterPro" id="IPR036291">
    <property type="entry name" value="NAD(P)-bd_dom_sf"/>
</dbReference>
<dbReference type="InterPro" id="IPR006151">
    <property type="entry name" value="Shikm_DH/Glu-tRNA_Rdtase"/>
</dbReference>
<dbReference type="NCBIfam" id="TIGR01035">
    <property type="entry name" value="hemA"/>
    <property type="match status" value="1"/>
</dbReference>
<dbReference type="PANTHER" id="PTHR43013">
    <property type="entry name" value="GLUTAMYL-TRNA REDUCTASE"/>
    <property type="match status" value="1"/>
</dbReference>
<dbReference type="PANTHER" id="PTHR43013:SF1">
    <property type="entry name" value="GLUTAMYL-TRNA REDUCTASE"/>
    <property type="match status" value="1"/>
</dbReference>
<dbReference type="Pfam" id="PF00745">
    <property type="entry name" value="GlutR_dimer"/>
    <property type="match status" value="1"/>
</dbReference>
<dbReference type="Pfam" id="PF05201">
    <property type="entry name" value="GlutR_N"/>
    <property type="match status" value="1"/>
</dbReference>
<dbReference type="Pfam" id="PF01488">
    <property type="entry name" value="Shikimate_DH"/>
    <property type="match status" value="1"/>
</dbReference>
<dbReference type="PIRSF" id="PIRSF000445">
    <property type="entry name" value="4pyrrol_synth_GluRdtase"/>
    <property type="match status" value="1"/>
</dbReference>
<dbReference type="SUPFAM" id="SSF69742">
    <property type="entry name" value="Glutamyl tRNA-reductase catalytic, N-terminal domain"/>
    <property type="match status" value="1"/>
</dbReference>
<dbReference type="SUPFAM" id="SSF69075">
    <property type="entry name" value="Glutamyl tRNA-reductase dimerization domain"/>
    <property type="match status" value="1"/>
</dbReference>
<dbReference type="SUPFAM" id="SSF51735">
    <property type="entry name" value="NAD(P)-binding Rossmann-fold domains"/>
    <property type="match status" value="1"/>
</dbReference>
<dbReference type="PROSITE" id="PS00747">
    <property type="entry name" value="GLUTR"/>
    <property type="match status" value="1"/>
</dbReference>
<sequence length="421" mass="46431">MKLLITGVSHKTAPVEVRECLAFREETLPAALADLKACEGVSEAVILSTCNRVEISLTTEDAVDPREIVDNFLSRHKAVSSASIGPHLYRHEGRDAIHHLFRVAASLDSMVVGEPQILGQLKVAYAAAKDCGALCGWLDGLMSRSFSVAKRVRSETGIGQMAVSVSYAAVELARKIFGSLTNRTVMIVGAGKMSELAARHLRRSGASHVFVTNRTHERAVDMAKLFQGTPVEYARFTAMLPEVDILIASSGAPHYILHKDEMQRVISARRNKPMFLIDIAVPRNIEPAINDLDNVFLYDIDDLQEVVNSNLRERMKEADHAELLVTEEVDRMMARMKVAEVTPVIVSLQEQLEQIRSGEMEKVRRRFGPFTAQQEEALEALTRGIINKVAHGPISELRSQAGKPDGAPAIAAIRKAFHLQD</sequence>
<reference key="1">
    <citation type="journal article" date="2009" name="Appl. Environ. Microbiol.">
        <title>Three genomes from the phylum Acidobacteria provide insight into the lifestyles of these microorganisms in soils.</title>
        <authorList>
            <person name="Ward N.L."/>
            <person name="Challacombe J.F."/>
            <person name="Janssen P.H."/>
            <person name="Henrissat B."/>
            <person name="Coutinho P.M."/>
            <person name="Wu M."/>
            <person name="Xie G."/>
            <person name="Haft D.H."/>
            <person name="Sait M."/>
            <person name="Badger J."/>
            <person name="Barabote R.D."/>
            <person name="Bradley B."/>
            <person name="Brettin T.S."/>
            <person name="Brinkac L.M."/>
            <person name="Bruce D."/>
            <person name="Creasy T."/>
            <person name="Daugherty S.C."/>
            <person name="Davidsen T.M."/>
            <person name="DeBoy R.T."/>
            <person name="Detter J.C."/>
            <person name="Dodson R.J."/>
            <person name="Durkin A.S."/>
            <person name="Ganapathy A."/>
            <person name="Gwinn-Giglio M."/>
            <person name="Han C.S."/>
            <person name="Khouri H."/>
            <person name="Kiss H."/>
            <person name="Kothari S.P."/>
            <person name="Madupu R."/>
            <person name="Nelson K.E."/>
            <person name="Nelson W.C."/>
            <person name="Paulsen I."/>
            <person name="Penn K."/>
            <person name="Ren Q."/>
            <person name="Rosovitz M.J."/>
            <person name="Selengut J.D."/>
            <person name="Shrivastava S."/>
            <person name="Sullivan S.A."/>
            <person name="Tapia R."/>
            <person name="Thompson L.S."/>
            <person name="Watkins K.L."/>
            <person name="Yang Q."/>
            <person name="Yu C."/>
            <person name="Zafar N."/>
            <person name="Zhou L."/>
            <person name="Kuske C.R."/>
        </authorList>
    </citation>
    <scope>NUCLEOTIDE SEQUENCE [LARGE SCALE GENOMIC DNA]</scope>
    <source>
        <strain>Ellin6076</strain>
    </source>
</reference>
<gene>
    <name evidence="1" type="primary">hemA</name>
    <name type="ordered locus">Acid_3178</name>
</gene>